<reference key="1">
    <citation type="submission" date="2007-04" db="EMBL/GenBank/DDBJ databases">
        <title>Complete genome sequence of the nitrogen-fixing bacterium Azorhizobium caulinodans ORS571.</title>
        <authorList>
            <person name="Lee K.B."/>
            <person name="Backer P.D."/>
            <person name="Aono T."/>
            <person name="Liu C.T."/>
            <person name="Suzuki S."/>
            <person name="Suzuki T."/>
            <person name="Kaneko T."/>
            <person name="Yamada M."/>
            <person name="Tabata S."/>
            <person name="Kupfer D.M."/>
            <person name="Najar F.Z."/>
            <person name="Wiley G.B."/>
            <person name="Roe B."/>
            <person name="Binnewies T."/>
            <person name="Ussery D."/>
            <person name="Vereecke D."/>
            <person name="Gevers D."/>
            <person name="Holsters M."/>
            <person name="Oyaizu H."/>
        </authorList>
    </citation>
    <scope>NUCLEOTIDE SEQUENCE [LARGE SCALE GENOMIC DNA]</scope>
    <source>
        <strain>ATCC 43989 / DSM 5975 / JCM 20966 / LMG 6465 / NBRC 14845 / NCIMB 13405 / ORS 571</strain>
    </source>
</reference>
<sequence>MATQNGSPTDNTAPALNVLVQYIKDFSFENPNAPRSLGAPQGQPDVNIQINVNARPLAPGEFEVELKIEGGAAVQGNTLFAFDLTYGGIFRLMNVPEQSLQPVVLIECPRLLFPFARQIVADAVRGGGFPPLMIDPVDFAALYQQRMMAEAQNLQTAGQA</sequence>
<feature type="chain" id="PRO_0000318219" description="Protein-export protein SecB">
    <location>
        <begin position="1"/>
        <end position="160"/>
    </location>
</feature>
<protein>
    <recommendedName>
        <fullName evidence="1">Protein-export protein SecB</fullName>
    </recommendedName>
</protein>
<comment type="function">
    <text evidence="1">One of the proteins required for the normal export of preproteins out of the cell cytoplasm. It is a molecular chaperone that binds to a subset of precursor proteins, maintaining them in a translocation-competent state. It also specifically binds to its receptor SecA.</text>
</comment>
<comment type="subunit">
    <text evidence="1">Homotetramer, a dimer of dimers. One homotetramer interacts with 1 SecA dimer.</text>
</comment>
<comment type="subcellular location">
    <subcellularLocation>
        <location evidence="1">Cytoplasm</location>
    </subcellularLocation>
</comment>
<comment type="similarity">
    <text evidence="1">Belongs to the SecB family.</text>
</comment>
<comment type="sequence caution" evidence="2">
    <conflict type="erroneous initiation">
        <sequence resource="EMBL-CDS" id="BAF90670"/>
    </conflict>
</comment>
<keyword id="KW-0143">Chaperone</keyword>
<keyword id="KW-0963">Cytoplasm</keyword>
<keyword id="KW-0653">Protein transport</keyword>
<keyword id="KW-1185">Reference proteome</keyword>
<keyword id="KW-0811">Translocation</keyword>
<keyword id="KW-0813">Transport</keyword>
<name>SECB_AZOC5</name>
<organism>
    <name type="scientific">Azorhizobium caulinodans (strain ATCC 43989 / DSM 5975 / JCM 20966 / LMG 6465 / NBRC 14845 / NCIMB 13405 / ORS 571)</name>
    <dbReference type="NCBI Taxonomy" id="438753"/>
    <lineage>
        <taxon>Bacteria</taxon>
        <taxon>Pseudomonadati</taxon>
        <taxon>Pseudomonadota</taxon>
        <taxon>Alphaproteobacteria</taxon>
        <taxon>Hyphomicrobiales</taxon>
        <taxon>Xanthobacteraceae</taxon>
        <taxon>Azorhizobium</taxon>
    </lineage>
</organism>
<accession>A8I1W4</accession>
<evidence type="ECO:0000255" key="1">
    <source>
        <dbReference type="HAMAP-Rule" id="MF_00821"/>
    </source>
</evidence>
<evidence type="ECO:0000305" key="2"/>
<gene>
    <name evidence="1" type="primary">secB</name>
    <name type="ordered locus">AZC_4672</name>
</gene>
<proteinExistence type="inferred from homology"/>
<dbReference type="EMBL" id="AP009384">
    <property type="protein sequence ID" value="BAF90670.1"/>
    <property type="status" value="ALT_INIT"/>
    <property type="molecule type" value="Genomic_DNA"/>
</dbReference>
<dbReference type="RefSeq" id="WP_043879833.1">
    <property type="nucleotide sequence ID" value="NC_009937.1"/>
</dbReference>
<dbReference type="SMR" id="A8I1W4"/>
<dbReference type="STRING" id="438753.AZC_4672"/>
<dbReference type="KEGG" id="azc:AZC_4672"/>
<dbReference type="eggNOG" id="COG1952">
    <property type="taxonomic scope" value="Bacteria"/>
</dbReference>
<dbReference type="HOGENOM" id="CLU_111574_0_0_5"/>
<dbReference type="Proteomes" id="UP000000270">
    <property type="component" value="Chromosome"/>
</dbReference>
<dbReference type="GO" id="GO:0005737">
    <property type="term" value="C:cytoplasm"/>
    <property type="evidence" value="ECO:0007669"/>
    <property type="project" value="UniProtKB-SubCell"/>
</dbReference>
<dbReference type="GO" id="GO:0051082">
    <property type="term" value="F:unfolded protein binding"/>
    <property type="evidence" value="ECO:0007669"/>
    <property type="project" value="InterPro"/>
</dbReference>
<dbReference type="GO" id="GO:0006457">
    <property type="term" value="P:protein folding"/>
    <property type="evidence" value="ECO:0007669"/>
    <property type="project" value="UniProtKB-UniRule"/>
</dbReference>
<dbReference type="GO" id="GO:0051262">
    <property type="term" value="P:protein tetramerization"/>
    <property type="evidence" value="ECO:0007669"/>
    <property type="project" value="InterPro"/>
</dbReference>
<dbReference type="GO" id="GO:0015031">
    <property type="term" value="P:protein transport"/>
    <property type="evidence" value="ECO:0007669"/>
    <property type="project" value="UniProtKB-UniRule"/>
</dbReference>
<dbReference type="Gene3D" id="3.10.420.10">
    <property type="entry name" value="SecB-like"/>
    <property type="match status" value="1"/>
</dbReference>
<dbReference type="HAMAP" id="MF_00821">
    <property type="entry name" value="SecB"/>
    <property type="match status" value="1"/>
</dbReference>
<dbReference type="InterPro" id="IPR003708">
    <property type="entry name" value="SecB"/>
</dbReference>
<dbReference type="InterPro" id="IPR035958">
    <property type="entry name" value="SecB-like_sf"/>
</dbReference>
<dbReference type="NCBIfam" id="NF004392">
    <property type="entry name" value="PRK05751.1-3"/>
    <property type="match status" value="1"/>
</dbReference>
<dbReference type="NCBIfam" id="TIGR00809">
    <property type="entry name" value="secB"/>
    <property type="match status" value="1"/>
</dbReference>
<dbReference type="PANTHER" id="PTHR36918">
    <property type="match status" value="1"/>
</dbReference>
<dbReference type="PANTHER" id="PTHR36918:SF1">
    <property type="entry name" value="PROTEIN-EXPORT PROTEIN SECB"/>
    <property type="match status" value="1"/>
</dbReference>
<dbReference type="Pfam" id="PF02556">
    <property type="entry name" value="SecB"/>
    <property type="match status" value="1"/>
</dbReference>
<dbReference type="PRINTS" id="PR01594">
    <property type="entry name" value="SECBCHAPRONE"/>
</dbReference>
<dbReference type="SUPFAM" id="SSF54611">
    <property type="entry name" value="SecB-like"/>
    <property type="match status" value="1"/>
</dbReference>